<dbReference type="EC" id="1.14.11.-"/>
<dbReference type="EMBL" id="CR942500">
    <property type="protein sequence ID" value="CAJ82044.1"/>
    <property type="molecule type" value="mRNA"/>
</dbReference>
<dbReference type="RefSeq" id="NP_001039211.1">
    <property type="nucleotide sequence ID" value="NM_001045746.1"/>
</dbReference>
<dbReference type="SMR" id="Q28C22"/>
<dbReference type="FunCoup" id="Q28C22">
    <property type="interactions" value="145"/>
</dbReference>
<dbReference type="STRING" id="8364.ENSXETP00000002908"/>
<dbReference type="PaxDb" id="8364-ENSXETP00000012772"/>
<dbReference type="GeneID" id="734070"/>
<dbReference type="KEGG" id="xtr:734070"/>
<dbReference type="AGR" id="Xenbase:XB-GENE-5715480"/>
<dbReference type="CTD" id="79676"/>
<dbReference type="Xenbase" id="XB-GENE-5715480">
    <property type="gene designation" value="ogfod2"/>
</dbReference>
<dbReference type="eggNOG" id="KOG1971">
    <property type="taxonomic scope" value="Eukaryota"/>
</dbReference>
<dbReference type="HOGENOM" id="CLU_045835_1_0_1"/>
<dbReference type="InParanoid" id="Q28C22"/>
<dbReference type="OMA" id="CQAFVDE"/>
<dbReference type="OrthoDB" id="1736837at2759"/>
<dbReference type="PhylomeDB" id="Q28C22"/>
<dbReference type="TreeFam" id="TF329650"/>
<dbReference type="Proteomes" id="UP000008143">
    <property type="component" value="Chromosome 1"/>
</dbReference>
<dbReference type="GO" id="GO:0051213">
    <property type="term" value="F:dioxygenase activity"/>
    <property type="evidence" value="ECO:0007669"/>
    <property type="project" value="UniProtKB-KW"/>
</dbReference>
<dbReference type="GO" id="GO:0005506">
    <property type="term" value="F:iron ion binding"/>
    <property type="evidence" value="ECO:0007669"/>
    <property type="project" value="InterPro"/>
</dbReference>
<dbReference type="GO" id="GO:0031418">
    <property type="term" value="F:L-ascorbic acid binding"/>
    <property type="evidence" value="ECO:0007669"/>
    <property type="project" value="UniProtKB-KW"/>
</dbReference>
<dbReference type="GO" id="GO:0016705">
    <property type="term" value="F:oxidoreductase activity, acting on paired donors, with incorporation or reduction of molecular oxygen"/>
    <property type="evidence" value="ECO:0007669"/>
    <property type="project" value="InterPro"/>
</dbReference>
<dbReference type="Gene3D" id="2.60.120.620">
    <property type="entry name" value="q2cbj1_9rhob like domain"/>
    <property type="match status" value="1"/>
</dbReference>
<dbReference type="InterPro" id="IPR005123">
    <property type="entry name" value="Oxoglu/Fe-dep_dioxygenase_dom"/>
</dbReference>
<dbReference type="InterPro" id="IPR006620">
    <property type="entry name" value="Pro_4_hyd_alph"/>
</dbReference>
<dbReference type="PANTHER" id="PTHR24014">
    <property type="entry name" value="2-OXOGLUTARATE AND IRON-DEPENDENT OXYGENASE DOMAIN-CONTAINING PROTEIN 2"/>
    <property type="match status" value="1"/>
</dbReference>
<dbReference type="PANTHER" id="PTHR24014:SF4">
    <property type="entry name" value="2-OXOGLUTARATE AND IRON-DEPENDENT OXYGENASE DOMAIN-CONTAINING PROTEIN 2"/>
    <property type="match status" value="1"/>
</dbReference>
<dbReference type="Pfam" id="PF25238">
    <property type="entry name" value="OGFOD2-like"/>
    <property type="match status" value="1"/>
</dbReference>
<dbReference type="SMART" id="SM00702">
    <property type="entry name" value="P4Hc"/>
    <property type="match status" value="1"/>
</dbReference>
<dbReference type="PROSITE" id="PS51471">
    <property type="entry name" value="FE2OG_OXY"/>
    <property type="match status" value="1"/>
</dbReference>
<sequence>MMTAPKPSYSCACFYTDNIFIQEFHVHVRYTGEQQFRRDYERVLSSQGCRTSEQFRNVLETIKKEVERRRKLGEESLHRRREISLHYKPLYPEVYVLQESFLAAEFLTAVKYSKSPQANVEGLLHHLHSITDKRIYRLPVFIPEFCAKLVEELENFERSDLPKGRPNTMNNYGILLNELGFVDALTAPLCEKYIEPLTSLLFPDWGGGCLDSHRAFVVKYALQEDLDLSCHYDNAEVTLNVSLGKEFTDGNLYFSDMKEVPVNERTYAEVEHITGQGILHRGQHVHGALPISSGERWNLILWMRASDVRNKCCPMCDNEPVLVKTLGDGDGFTSVREDREQTVDICTLT</sequence>
<reference key="1">
    <citation type="submission" date="2006-10" db="EMBL/GenBank/DDBJ databases">
        <authorList>
            <consortium name="Sanger Xenopus tropicalis EST/cDNA project"/>
        </authorList>
    </citation>
    <scope>NUCLEOTIDE SEQUENCE [LARGE SCALE MRNA]</scope>
    <source>
        <tissue>Egg</tissue>
    </source>
</reference>
<proteinExistence type="evidence at transcript level"/>
<organism>
    <name type="scientific">Xenopus tropicalis</name>
    <name type="common">Western clawed frog</name>
    <name type="synonym">Silurana tropicalis</name>
    <dbReference type="NCBI Taxonomy" id="8364"/>
    <lineage>
        <taxon>Eukaryota</taxon>
        <taxon>Metazoa</taxon>
        <taxon>Chordata</taxon>
        <taxon>Craniata</taxon>
        <taxon>Vertebrata</taxon>
        <taxon>Euteleostomi</taxon>
        <taxon>Amphibia</taxon>
        <taxon>Batrachia</taxon>
        <taxon>Anura</taxon>
        <taxon>Pipoidea</taxon>
        <taxon>Pipidae</taxon>
        <taxon>Xenopodinae</taxon>
        <taxon>Xenopus</taxon>
        <taxon>Silurana</taxon>
    </lineage>
</organism>
<gene>
    <name type="primary">ogfod2</name>
    <name type="ORF">TEgg127j14.1</name>
</gene>
<evidence type="ECO:0000250" key="1"/>
<evidence type="ECO:0000255" key="2">
    <source>
        <dbReference type="PROSITE-ProRule" id="PRU00805"/>
    </source>
</evidence>
<evidence type="ECO:0000305" key="3"/>
<comment type="cofactor">
    <cofactor evidence="2">
        <name>Fe(2+)</name>
        <dbReference type="ChEBI" id="CHEBI:29033"/>
    </cofactor>
    <text evidence="2">Binds 1 Fe(2+) ion per subunit.</text>
</comment>
<comment type="cofactor">
    <cofactor evidence="1">
        <name>L-ascorbate</name>
        <dbReference type="ChEBI" id="CHEBI:38290"/>
    </cofactor>
</comment>
<comment type="similarity">
    <text evidence="3">Belongs to the OGFOD2 family.</text>
</comment>
<accession>Q28C22</accession>
<feature type="chain" id="PRO_0000288981" description="2-oxoglutarate and iron-dependent oxygenase domain-containing protein 2">
    <location>
        <begin position="1"/>
        <end position="349"/>
    </location>
</feature>
<feature type="domain" description="Fe2OG dioxygenase" evidence="2">
    <location>
        <begin position="211"/>
        <end position="305"/>
    </location>
</feature>
<feature type="binding site" evidence="2">
    <location>
        <position position="231"/>
    </location>
    <ligand>
        <name>Fe cation</name>
        <dbReference type="ChEBI" id="CHEBI:24875"/>
    </ligand>
</feature>
<feature type="binding site" evidence="2">
    <location>
        <position position="233"/>
    </location>
    <ligand>
        <name>Fe cation</name>
        <dbReference type="ChEBI" id="CHEBI:24875"/>
    </ligand>
</feature>
<feature type="binding site" evidence="2">
    <location>
        <position position="286"/>
    </location>
    <ligand>
        <name>Fe cation</name>
        <dbReference type="ChEBI" id="CHEBI:24875"/>
    </ligand>
</feature>
<feature type="binding site" evidence="2">
    <location>
        <position position="296"/>
    </location>
    <ligand>
        <name>2-oxoglutarate</name>
        <dbReference type="ChEBI" id="CHEBI:16810"/>
    </ligand>
</feature>
<protein>
    <recommendedName>
        <fullName>2-oxoglutarate and iron-dependent oxygenase domain-containing protein 2</fullName>
        <ecNumber>1.14.11.-</ecNumber>
    </recommendedName>
</protein>
<keyword id="KW-0223">Dioxygenase</keyword>
<keyword id="KW-0408">Iron</keyword>
<keyword id="KW-0479">Metal-binding</keyword>
<keyword id="KW-0560">Oxidoreductase</keyword>
<keyword id="KW-1185">Reference proteome</keyword>
<keyword id="KW-0847">Vitamin C</keyword>
<name>OGFD2_XENTR</name>